<comment type="function">
    <text evidence="1">Co-chaperone involved in the maturation of iron-sulfur cluster-containing proteins. Seems to help targeting proteins to be folded toward HscA.</text>
</comment>
<comment type="subunit">
    <text evidence="1">Interacts with HscA and stimulates its ATPase activity.</text>
</comment>
<comment type="similarity">
    <text evidence="1">Belongs to the HscB family.</text>
</comment>
<reference key="1">
    <citation type="journal article" date="2006" name="Nat. Biotechnol.">
        <title>Complete genome of the mutualistic, N2-fixing grass endophyte Azoarcus sp. strain BH72.</title>
        <authorList>
            <person name="Krause A."/>
            <person name="Ramakumar A."/>
            <person name="Bartels D."/>
            <person name="Battistoni F."/>
            <person name="Bekel T."/>
            <person name="Boch J."/>
            <person name="Boehm M."/>
            <person name="Friedrich F."/>
            <person name="Hurek T."/>
            <person name="Krause L."/>
            <person name="Linke B."/>
            <person name="McHardy A.C."/>
            <person name="Sarkar A."/>
            <person name="Schneiker S."/>
            <person name="Syed A.A."/>
            <person name="Thauer R."/>
            <person name="Vorhoelter F.-J."/>
            <person name="Weidner S."/>
            <person name="Puehler A."/>
            <person name="Reinhold-Hurek B."/>
            <person name="Kaiser O."/>
            <person name="Goesmann A."/>
        </authorList>
    </citation>
    <scope>NUCLEOTIDE SEQUENCE [LARGE SCALE GENOMIC DNA]</scope>
    <source>
        <strain>BH72</strain>
    </source>
</reference>
<protein>
    <recommendedName>
        <fullName evidence="1">Co-chaperone protein HscB homolog</fullName>
    </recommendedName>
</protein>
<dbReference type="EMBL" id="AM406670">
    <property type="protein sequence ID" value="CAL94630.1"/>
    <property type="molecule type" value="Genomic_DNA"/>
</dbReference>
<dbReference type="RefSeq" id="WP_011765744.1">
    <property type="nucleotide sequence ID" value="NC_008702.1"/>
</dbReference>
<dbReference type="SMR" id="A1K725"/>
<dbReference type="STRING" id="62928.azo2013"/>
<dbReference type="KEGG" id="azo:azo2013"/>
<dbReference type="eggNOG" id="COG1076">
    <property type="taxonomic scope" value="Bacteria"/>
</dbReference>
<dbReference type="HOGENOM" id="CLU_068529_2_1_4"/>
<dbReference type="Proteomes" id="UP000002588">
    <property type="component" value="Chromosome"/>
</dbReference>
<dbReference type="GO" id="GO:0001671">
    <property type="term" value="F:ATPase activator activity"/>
    <property type="evidence" value="ECO:0007669"/>
    <property type="project" value="InterPro"/>
</dbReference>
<dbReference type="GO" id="GO:0051087">
    <property type="term" value="F:protein-folding chaperone binding"/>
    <property type="evidence" value="ECO:0007669"/>
    <property type="project" value="InterPro"/>
</dbReference>
<dbReference type="GO" id="GO:0044571">
    <property type="term" value="P:[2Fe-2S] cluster assembly"/>
    <property type="evidence" value="ECO:0007669"/>
    <property type="project" value="InterPro"/>
</dbReference>
<dbReference type="GO" id="GO:0051259">
    <property type="term" value="P:protein complex oligomerization"/>
    <property type="evidence" value="ECO:0007669"/>
    <property type="project" value="InterPro"/>
</dbReference>
<dbReference type="GO" id="GO:0006457">
    <property type="term" value="P:protein folding"/>
    <property type="evidence" value="ECO:0007669"/>
    <property type="project" value="UniProtKB-UniRule"/>
</dbReference>
<dbReference type="Gene3D" id="1.10.287.110">
    <property type="entry name" value="DnaJ domain"/>
    <property type="match status" value="1"/>
</dbReference>
<dbReference type="Gene3D" id="1.20.1280.20">
    <property type="entry name" value="HscB, C-terminal domain"/>
    <property type="match status" value="1"/>
</dbReference>
<dbReference type="HAMAP" id="MF_00682">
    <property type="entry name" value="HscB"/>
    <property type="match status" value="1"/>
</dbReference>
<dbReference type="InterPro" id="IPR004640">
    <property type="entry name" value="HscB"/>
</dbReference>
<dbReference type="InterPro" id="IPR036386">
    <property type="entry name" value="HscB_C_sf"/>
</dbReference>
<dbReference type="InterPro" id="IPR009073">
    <property type="entry name" value="HscB_oligo_C"/>
</dbReference>
<dbReference type="InterPro" id="IPR036869">
    <property type="entry name" value="J_dom_sf"/>
</dbReference>
<dbReference type="NCBIfam" id="TIGR00714">
    <property type="entry name" value="hscB"/>
    <property type="match status" value="1"/>
</dbReference>
<dbReference type="NCBIfam" id="NF002935">
    <property type="entry name" value="PRK03578.1"/>
    <property type="match status" value="1"/>
</dbReference>
<dbReference type="PANTHER" id="PTHR14021">
    <property type="entry name" value="IRON-SULFUR CLUSTER CO-CHAPERONE PROTEIN HSCB"/>
    <property type="match status" value="1"/>
</dbReference>
<dbReference type="PANTHER" id="PTHR14021:SF15">
    <property type="entry name" value="IRON-SULFUR CLUSTER CO-CHAPERONE PROTEIN HSCB"/>
    <property type="match status" value="1"/>
</dbReference>
<dbReference type="Pfam" id="PF07743">
    <property type="entry name" value="HSCB_C"/>
    <property type="match status" value="1"/>
</dbReference>
<dbReference type="SUPFAM" id="SSF46565">
    <property type="entry name" value="Chaperone J-domain"/>
    <property type="match status" value="1"/>
</dbReference>
<dbReference type="SUPFAM" id="SSF47144">
    <property type="entry name" value="HSC20 (HSCB), C-terminal oligomerisation domain"/>
    <property type="match status" value="1"/>
</dbReference>
<feature type="chain" id="PRO_1000131725" description="Co-chaperone protein HscB homolog">
    <location>
        <begin position="1"/>
        <end position="177"/>
    </location>
</feature>
<feature type="domain" description="J" evidence="1">
    <location>
        <begin position="8"/>
        <end position="80"/>
    </location>
</feature>
<sequence>MAIDLQQDYFSLFGMPRRFRIDESALEAAWHGLQGEVHPDRFAHLPDVEKRRSMQWATRVNEGFRVLRKPLSRAQYLLELAGVDAAIDTNTAMSPEFLMEQMEWREAVEEARAAGEVDELEQLHLRLRQHSREVHAGLADALDDAGDYPAAAETVRRLMFIEKLQHEIDDALEALEN</sequence>
<organism>
    <name type="scientific">Azoarcus sp. (strain BH72)</name>
    <dbReference type="NCBI Taxonomy" id="418699"/>
    <lineage>
        <taxon>Bacteria</taxon>
        <taxon>Pseudomonadati</taxon>
        <taxon>Pseudomonadota</taxon>
        <taxon>Betaproteobacteria</taxon>
        <taxon>Rhodocyclales</taxon>
        <taxon>Zoogloeaceae</taxon>
        <taxon>Azoarcus</taxon>
    </lineage>
</organism>
<proteinExistence type="inferred from homology"/>
<keyword id="KW-0143">Chaperone</keyword>
<keyword id="KW-1185">Reference proteome</keyword>
<gene>
    <name evidence="1" type="primary">hscB</name>
    <name type="ordered locus">azo2013</name>
</gene>
<name>HSCB_AZOSB</name>
<evidence type="ECO:0000255" key="1">
    <source>
        <dbReference type="HAMAP-Rule" id="MF_00682"/>
    </source>
</evidence>
<accession>A1K725</accession>